<protein>
    <recommendedName>
        <fullName evidence="5">Basic phospholipase A2 daboxin P</fullName>
        <shortName evidence="6">svPLA2</shortName>
        <ecNumber evidence="3 4">3.1.1.4</ecNumber>
    </recommendedName>
    <alternativeName>
        <fullName evidence="6">Phosphatidylcholine 2-acylhydrolase</fullName>
    </alternativeName>
</protein>
<reference key="1">
    <citation type="journal article" date="2016" name="PLoS ONE">
        <title>Daboxin P, a major phospholipase A2 enzyme from the Indian Daboia russelii russelii venom targets factor X and factor Xa for its anticoagulant activity.</title>
        <authorList>
            <person name="Sharma M."/>
            <person name="Iyer J.K."/>
            <person name="Shih N."/>
            <person name="Majumder M."/>
            <person name="Mattaparthi V.S."/>
            <person name="Mukhopadhyay R."/>
            <person name="Doley R."/>
        </authorList>
    </citation>
    <scope>PROTEIN SEQUENCE</scope>
    <scope>FUNCTION</scope>
    <scope>CATALYTIC ACTIVITY</scope>
    <scope>COFACTOR</scope>
    <scope>BIOPHYSICOCHEMICAL PROPERTIES</scope>
    <scope>SUBCELLULAR LOCATION</scope>
    <scope>TISSUE SPECIFICITY</scope>
    <scope>MASS SPECTROMETRY</scope>
    <scope>IDENTIFICATION BY MASS SPECTROMETRY</scope>
    <source>
        <tissue>Venom</tissue>
    </source>
</reference>
<organism>
    <name type="scientific">Daboia russelii</name>
    <name type="common">Russel's viper</name>
    <name type="synonym">Vipera russelii</name>
    <dbReference type="NCBI Taxonomy" id="8707"/>
    <lineage>
        <taxon>Eukaryota</taxon>
        <taxon>Metazoa</taxon>
        <taxon>Chordata</taxon>
        <taxon>Craniata</taxon>
        <taxon>Vertebrata</taxon>
        <taxon>Euteleostomi</taxon>
        <taxon>Lepidosauria</taxon>
        <taxon>Squamata</taxon>
        <taxon>Bifurcata</taxon>
        <taxon>Unidentata</taxon>
        <taxon>Episquamata</taxon>
        <taxon>Toxicofera</taxon>
        <taxon>Serpentes</taxon>
        <taxon>Colubroidea</taxon>
        <taxon>Viperidae</taxon>
        <taxon>Viperinae</taxon>
        <taxon>Daboia</taxon>
    </lineage>
</organism>
<dbReference type="EC" id="3.1.1.4" evidence="3 4"/>
<dbReference type="SMR" id="C0HK16"/>
<dbReference type="BRENDA" id="3.1.1.4">
    <property type="organism ID" value="5485"/>
</dbReference>
<dbReference type="GO" id="GO:0005576">
    <property type="term" value="C:extracellular region"/>
    <property type="evidence" value="ECO:0007669"/>
    <property type="project" value="UniProtKB-SubCell"/>
</dbReference>
<dbReference type="GO" id="GO:0005509">
    <property type="term" value="F:calcium ion binding"/>
    <property type="evidence" value="ECO:0007669"/>
    <property type="project" value="InterPro"/>
</dbReference>
<dbReference type="GO" id="GO:0047498">
    <property type="term" value="F:calcium-dependent phospholipase A2 activity"/>
    <property type="evidence" value="ECO:0007669"/>
    <property type="project" value="TreeGrafter"/>
</dbReference>
<dbReference type="GO" id="GO:0005543">
    <property type="term" value="F:phospholipid binding"/>
    <property type="evidence" value="ECO:0007669"/>
    <property type="project" value="TreeGrafter"/>
</dbReference>
<dbReference type="GO" id="GO:0090729">
    <property type="term" value="F:toxin activity"/>
    <property type="evidence" value="ECO:0007669"/>
    <property type="project" value="UniProtKB-KW"/>
</dbReference>
<dbReference type="GO" id="GO:0050482">
    <property type="term" value="P:arachidonate secretion"/>
    <property type="evidence" value="ECO:0007669"/>
    <property type="project" value="InterPro"/>
</dbReference>
<dbReference type="GO" id="GO:0016042">
    <property type="term" value="P:lipid catabolic process"/>
    <property type="evidence" value="ECO:0007669"/>
    <property type="project" value="UniProtKB-KW"/>
</dbReference>
<dbReference type="GO" id="GO:0042130">
    <property type="term" value="P:negative regulation of T cell proliferation"/>
    <property type="evidence" value="ECO:0007669"/>
    <property type="project" value="TreeGrafter"/>
</dbReference>
<dbReference type="GO" id="GO:0006644">
    <property type="term" value="P:phospholipid metabolic process"/>
    <property type="evidence" value="ECO:0007669"/>
    <property type="project" value="InterPro"/>
</dbReference>
<dbReference type="CDD" id="cd00125">
    <property type="entry name" value="PLA2c"/>
    <property type="match status" value="1"/>
</dbReference>
<dbReference type="FunFam" id="1.20.90.10:FF:000001">
    <property type="entry name" value="Basic phospholipase A2 homolog"/>
    <property type="match status" value="1"/>
</dbReference>
<dbReference type="Gene3D" id="1.20.90.10">
    <property type="entry name" value="Phospholipase A2 domain"/>
    <property type="match status" value="1"/>
</dbReference>
<dbReference type="InterPro" id="IPR001211">
    <property type="entry name" value="PLipase_A2"/>
</dbReference>
<dbReference type="InterPro" id="IPR033112">
    <property type="entry name" value="PLipase_A2_Asp_AS"/>
</dbReference>
<dbReference type="InterPro" id="IPR016090">
    <property type="entry name" value="PLipase_A2_dom"/>
</dbReference>
<dbReference type="InterPro" id="IPR036444">
    <property type="entry name" value="PLipase_A2_dom_sf"/>
</dbReference>
<dbReference type="InterPro" id="IPR033113">
    <property type="entry name" value="PLipase_A2_His_AS"/>
</dbReference>
<dbReference type="PANTHER" id="PTHR11716">
    <property type="entry name" value="PHOSPHOLIPASE A2 FAMILY MEMBER"/>
    <property type="match status" value="1"/>
</dbReference>
<dbReference type="PANTHER" id="PTHR11716:SF9">
    <property type="entry name" value="PHOSPHOLIPASE A2, MEMBRANE ASSOCIATED"/>
    <property type="match status" value="1"/>
</dbReference>
<dbReference type="Pfam" id="PF00068">
    <property type="entry name" value="Phospholip_A2_1"/>
    <property type="match status" value="1"/>
</dbReference>
<dbReference type="PRINTS" id="PR00389">
    <property type="entry name" value="PHPHLIPASEA2"/>
</dbReference>
<dbReference type="SMART" id="SM00085">
    <property type="entry name" value="PA2c"/>
    <property type="match status" value="1"/>
</dbReference>
<dbReference type="SUPFAM" id="SSF48619">
    <property type="entry name" value="Phospholipase A2, PLA2"/>
    <property type="match status" value="1"/>
</dbReference>
<dbReference type="PROSITE" id="PS00119">
    <property type="entry name" value="PA2_ASP"/>
    <property type="match status" value="1"/>
</dbReference>
<dbReference type="PROSITE" id="PS00118">
    <property type="entry name" value="PA2_HIS"/>
    <property type="match status" value="1"/>
</dbReference>
<sequence>SLLEFGKMILEETGKLAIPSYSSYGCYCGWGGKGTPKDATDRCCFVHDCCYGNLPDCNNKSKRYRYKKVNGAIVCEKGTSCENRICECDKAAAICFRQNLNTYSKKYMLYPDFLCKGELVC</sequence>
<proteinExistence type="evidence at protein level"/>
<keyword id="KW-1203">Blood coagulation cascade inhibiting toxin</keyword>
<keyword id="KW-0106">Calcium</keyword>
<keyword id="KW-0903">Direct protein sequencing</keyword>
<keyword id="KW-1015">Disulfide bond</keyword>
<keyword id="KW-1199">Hemostasis impairing toxin</keyword>
<keyword id="KW-0378">Hydrolase</keyword>
<keyword id="KW-0442">Lipid degradation</keyword>
<keyword id="KW-0443">Lipid metabolism</keyword>
<keyword id="KW-0479">Metal-binding</keyword>
<keyword id="KW-0964">Secreted</keyword>
<keyword id="KW-0800">Toxin</keyword>
<feature type="chain" id="PRO_0000436848" description="Basic phospholipase A2 daboxin P" evidence="4">
    <location>
        <begin position="1"/>
        <end position="121"/>
    </location>
</feature>
<feature type="active site" evidence="1">
    <location>
        <position position="47"/>
    </location>
</feature>
<feature type="active site" evidence="1">
    <location>
        <position position="89"/>
    </location>
</feature>
<feature type="binding site" evidence="2">
    <location>
        <position position="27"/>
    </location>
    <ligand>
        <name>Ca(2+)</name>
        <dbReference type="ChEBI" id="CHEBI:29108"/>
    </ligand>
</feature>
<feature type="binding site" evidence="2">
    <location>
        <position position="29"/>
    </location>
    <ligand>
        <name>Ca(2+)</name>
        <dbReference type="ChEBI" id="CHEBI:29108"/>
    </ligand>
</feature>
<feature type="binding site" evidence="2">
    <location>
        <position position="31"/>
    </location>
    <ligand>
        <name>Ca(2+)</name>
        <dbReference type="ChEBI" id="CHEBI:29108"/>
    </ligand>
</feature>
<feature type="binding site" evidence="2">
    <location>
        <position position="48"/>
    </location>
    <ligand>
        <name>Ca(2+)</name>
        <dbReference type="ChEBI" id="CHEBI:29108"/>
    </ligand>
</feature>
<feature type="disulfide bond" evidence="2">
    <location>
        <begin position="26"/>
        <end position="115"/>
    </location>
</feature>
<feature type="disulfide bond" evidence="2">
    <location>
        <begin position="28"/>
        <end position="44"/>
    </location>
</feature>
<feature type="disulfide bond" evidence="2">
    <location>
        <begin position="43"/>
        <end position="95"/>
    </location>
</feature>
<feature type="disulfide bond" evidence="2">
    <location>
        <begin position="49"/>
        <end position="121"/>
    </location>
</feature>
<feature type="disulfide bond" evidence="2">
    <location>
        <begin position="50"/>
        <end position="88"/>
    </location>
</feature>
<feature type="disulfide bond" evidence="2">
    <location>
        <begin position="57"/>
        <end position="81"/>
    </location>
</feature>
<feature type="disulfide bond" evidence="2">
    <location>
        <begin position="75"/>
        <end position="86"/>
    </location>
</feature>
<accession>C0HK16</accession>
<evidence type="ECO:0000250" key="1">
    <source>
        <dbReference type="UniProtKB" id="P14418"/>
    </source>
</evidence>
<evidence type="ECO:0000250" key="2">
    <source>
        <dbReference type="UniProtKB" id="P59071"/>
    </source>
</evidence>
<evidence type="ECO:0000255" key="3">
    <source>
        <dbReference type="PROSITE-ProRule" id="PRU10035"/>
    </source>
</evidence>
<evidence type="ECO:0000269" key="4">
    <source>
    </source>
</evidence>
<evidence type="ECO:0000303" key="5">
    <source>
    </source>
</evidence>
<evidence type="ECO:0000305" key="6"/>
<evidence type="ECO:0000305" key="7">
    <source>
    </source>
</evidence>
<comment type="function">
    <text evidence="4">Snake venom phospholipase A2 (PLA2) that exhibits anticoagulant activity, probably by binding to factor X and its activated form factor Xa (F10). Shows no cytotoxicity. PLA2 catalyzes the calcium-dependent hydrolysis of the 2-acyl groups in 3-sn-phosphoglycerides.</text>
</comment>
<comment type="catalytic activity">
    <reaction evidence="3 4">
        <text>a 1,2-diacyl-sn-glycero-3-phosphocholine + H2O = a 1-acyl-sn-glycero-3-phosphocholine + a fatty acid + H(+)</text>
        <dbReference type="Rhea" id="RHEA:15801"/>
        <dbReference type="ChEBI" id="CHEBI:15377"/>
        <dbReference type="ChEBI" id="CHEBI:15378"/>
        <dbReference type="ChEBI" id="CHEBI:28868"/>
        <dbReference type="ChEBI" id="CHEBI:57643"/>
        <dbReference type="ChEBI" id="CHEBI:58168"/>
        <dbReference type="EC" id="3.1.1.4"/>
    </reaction>
</comment>
<comment type="cofactor">
    <cofactor evidence="4">
        <name>Ca(2+)</name>
        <dbReference type="ChEBI" id="CHEBI:29108"/>
    </cofactor>
</comment>
<comment type="biophysicochemical properties">
    <kinetics>
        <KM evidence="4">6.6 mM for diheptanoyl thio-phosphatidylcholine</KM>
        <Vmax evidence="4">1.14 mmol/min/mg enzyme</Vmax>
    </kinetics>
</comment>
<comment type="subcellular location">
    <subcellularLocation>
        <location evidence="4">Secreted</location>
    </subcellularLocation>
</comment>
<comment type="tissue specificity">
    <text evidence="7">Expressed by the venom gland.</text>
</comment>
<comment type="mass spectrometry"/>
<comment type="similarity">
    <text evidence="6">Belongs to the phospholipase A2 family. Group II subfamily. D49 sub-subfamily.</text>
</comment>
<name>PA2BD_DABRR</name>